<reference key="1">
    <citation type="submission" date="2005-03" db="EMBL/GenBank/DDBJ databases">
        <title>Annotation of the Saccharomyces cerevisiae RM11-1a genome.</title>
        <authorList>
            <consortium name="The Broad Institute Genome Sequencing Platform"/>
            <person name="Birren B.W."/>
            <person name="Lander E.S."/>
            <person name="Galagan J.E."/>
            <person name="Nusbaum C."/>
            <person name="Devon K."/>
            <person name="Cuomo C."/>
            <person name="Jaffe D.B."/>
            <person name="Butler J."/>
            <person name="Alvarez P."/>
            <person name="Gnerre S."/>
            <person name="Grabherr M."/>
            <person name="Kleber M."/>
            <person name="Mauceli E.W."/>
            <person name="Brockman W."/>
            <person name="MacCallum I.A."/>
            <person name="Rounsley S."/>
            <person name="Young S.K."/>
            <person name="LaButti K."/>
            <person name="Pushparaj V."/>
            <person name="DeCaprio D."/>
            <person name="Crawford M."/>
            <person name="Koehrsen M."/>
            <person name="Engels R."/>
            <person name="Montgomery P."/>
            <person name="Pearson M."/>
            <person name="Howarth C."/>
            <person name="Larson L."/>
            <person name="Luoma S."/>
            <person name="White J."/>
            <person name="O'Leary S."/>
            <person name="Kodira C.D."/>
            <person name="Zeng Q."/>
            <person name="Yandava C."/>
            <person name="Alvarado L."/>
            <person name="Pratt S."/>
            <person name="Kruglyak L."/>
        </authorList>
    </citation>
    <scope>NUCLEOTIDE SEQUENCE [LARGE SCALE GENOMIC DNA]</scope>
    <source>
        <strain>RM11-1a</strain>
    </source>
</reference>
<evidence type="ECO:0000255" key="1">
    <source>
        <dbReference type="HAMAP-Rule" id="MF_03100"/>
    </source>
</evidence>
<protein>
    <recommendedName>
        <fullName evidence="1">Structure-specific endonuclease subunit SLX1</fullName>
        <ecNumber evidence="1">3.1.-.-</ecNumber>
    </recommendedName>
</protein>
<accession>B3LMT5</accession>
<feature type="chain" id="PRO_0000383804" description="Structure-specific endonuclease subunit SLX1">
    <location>
        <begin position="1"/>
        <end position="304"/>
    </location>
</feature>
<feature type="domain" description="GIY-YIG" evidence="1">
    <location>
        <begin position="12"/>
        <end position="95"/>
    </location>
</feature>
<feature type="zinc finger region" description="SLX1-type" evidence="1">
    <location>
        <begin position="218"/>
        <end position="282"/>
    </location>
</feature>
<dbReference type="EC" id="3.1.-.-" evidence="1"/>
<dbReference type="EMBL" id="CH408048">
    <property type="protein sequence ID" value="EDV11888.1"/>
    <property type="molecule type" value="Genomic_DNA"/>
</dbReference>
<dbReference type="SMR" id="B3LMT5"/>
<dbReference type="HOGENOM" id="CLU_030739_1_1_1"/>
<dbReference type="OrthoDB" id="39816at4893"/>
<dbReference type="Proteomes" id="UP000008335">
    <property type="component" value="Unassembled WGS sequence"/>
</dbReference>
<dbReference type="GO" id="GO:0033557">
    <property type="term" value="C:Slx1-Slx4 complex"/>
    <property type="evidence" value="ECO:0007669"/>
    <property type="project" value="UniProtKB-UniRule"/>
</dbReference>
<dbReference type="GO" id="GO:0017108">
    <property type="term" value="F:5'-flap endonuclease activity"/>
    <property type="evidence" value="ECO:0007669"/>
    <property type="project" value="UniProtKB-UniRule"/>
</dbReference>
<dbReference type="GO" id="GO:0008821">
    <property type="term" value="F:crossover junction DNA endonuclease activity"/>
    <property type="evidence" value="ECO:0007669"/>
    <property type="project" value="TreeGrafter"/>
</dbReference>
<dbReference type="GO" id="GO:0008270">
    <property type="term" value="F:zinc ion binding"/>
    <property type="evidence" value="ECO:0007669"/>
    <property type="project" value="UniProtKB-KW"/>
</dbReference>
<dbReference type="GO" id="GO:0000724">
    <property type="term" value="P:double-strand break repair via homologous recombination"/>
    <property type="evidence" value="ECO:0007669"/>
    <property type="project" value="TreeGrafter"/>
</dbReference>
<dbReference type="CDD" id="cd10455">
    <property type="entry name" value="GIY-YIG_SLX1"/>
    <property type="match status" value="1"/>
</dbReference>
<dbReference type="FunFam" id="3.40.1440.10:FF:000006">
    <property type="entry name" value="Structure-specific endonuclease subunit SLX1"/>
    <property type="match status" value="1"/>
</dbReference>
<dbReference type="Gene3D" id="3.40.1440.10">
    <property type="entry name" value="GIY-YIG endonuclease"/>
    <property type="match status" value="1"/>
</dbReference>
<dbReference type="Gene3D" id="3.30.40.10">
    <property type="entry name" value="Zinc/RING finger domain, C3HC4 (zinc finger)"/>
    <property type="match status" value="1"/>
</dbReference>
<dbReference type="HAMAP" id="MF_03100">
    <property type="entry name" value="Endonuc_su_Slx1"/>
    <property type="match status" value="1"/>
</dbReference>
<dbReference type="InterPro" id="IPR000305">
    <property type="entry name" value="GIY-YIG_endonuc"/>
</dbReference>
<dbReference type="InterPro" id="IPR035901">
    <property type="entry name" value="GIY-YIG_endonuc_sf"/>
</dbReference>
<dbReference type="InterPro" id="IPR027520">
    <property type="entry name" value="Slx1"/>
</dbReference>
<dbReference type="InterPro" id="IPR048749">
    <property type="entry name" value="SLX1_C"/>
</dbReference>
<dbReference type="InterPro" id="IPR050381">
    <property type="entry name" value="SLX1_endonuclease"/>
</dbReference>
<dbReference type="InterPro" id="IPR013083">
    <property type="entry name" value="Znf_RING/FYVE/PHD"/>
</dbReference>
<dbReference type="PANTHER" id="PTHR20208">
    <property type="entry name" value="STRUCTURE-SPECIFIC ENDONUCLEASE SUBUNIT SLX1"/>
    <property type="match status" value="1"/>
</dbReference>
<dbReference type="PANTHER" id="PTHR20208:SF10">
    <property type="entry name" value="STRUCTURE-SPECIFIC ENDONUCLEASE SUBUNIT SLX1"/>
    <property type="match status" value="1"/>
</dbReference>
<dbReference type="Pfam" id="PF01541">
    <property type="entry name" value="GIY-YIG"/>
    <property type="match status" value="1"/>
</dbReference>
<dbReference type="Pfam" id="PF21202">
    <property type="entry name" value="SLX1_C"/>
    <property type="match status" value="1"/>
</dbReference>
<dbReference type="SMART" id="SM00465">
    <property type="entry name" value="GIYc"/>
    <property type="match status" value="1"/>
</dbReference>
<dbReference type="SUPFAM" id="SSF82771">
    <property type="entry name" value="GIY-YIG endonuclease"/>
    <property type="match status" value="1"/>
</dbReference>
<dbReference type="PROSITE" id="PS50164">
    <property type="entry name" value="GIY_YIG"/>
    <property type="match status" value="1"/>
</dbReference>
<sequence length="304" mass="35778">MSQKIQQHQFPDFYCCYLLQSINKRQSFYVGSTPNPVRRLRQHNGKLAVGGAYRTKRDGSRPWEMIMIVRGFPSKIAALQFEHAWQHGYQTHYIAEKDRVVKHKAGGRTLHHKVALMKLLLKHEFFQRMNLIVDVFNIKAWEVWKQDKFFIERDRFPINIQINENALEEPKEKTVDVLMDHSDENLKVVEAVYTKVIENERNIFETFEKKLTTGVVRCEICEKEIDYTSEEQNLKPFVALCNNKDCGSVNHLKCLHRYFLDDEQLIVGRRNLIPRGGKCPKCDTFCDWTTLVKFSTRMKLAHGK</sequence>
<organism>
    <name type="scientific">Saccharomyces cerevisiae (strain RM11-1a)</name>
    <name type="common">Baker's yeast</name>
    <dbReference type="NCBI Taxonomy" id="285006"/>
    <lineage>
        <taxon>Eukaryota</taxon>
        <taxon>Fungi</taxon>
        <taxon>Dikarya</taxon>
        <taxon>Ascomycota</taxon>
        <taxon>Saccharomycotina</taxon>
        <taxon>Saccharomycetes</taxon>
        <taxon>Saccharomycetales</taxon>
        <taxon>Saccharomycetaceae</taxon>
        <taxon>Saccharomyces</taxon>
    </lineage>
</organism>
<keyword id="KW-0227">DNA damage</keyword>
<keyword id="KW-0233">DNA recombination</keyword>
<keyword id="KW-0234">DNA repair</keyword>
<keyword id="KW-0255">Endonuclease</keyword>
<keyword id="KW-0378">Hydrolase</keyword>
<keyword id="KW-0479">Metal-binding</keyword>
<keyword id="KW-0540">Nuclease</keyword>
<keyword id="KW-0539">Nucleus</keyword>
<keyword id="KW-0862">Zinc</keyword>
<keyword id="KW-0863">Zinc-finger</keyword>
<comment type="function">
    <text evidence="1">Catalytic subunit of the SLX1-SLX4 structure-specific endonuclease that resolves DNA secondary structures generated during DNA repair and recombination. Has endonuclease activity towards branched DNA substrates, introducing single-strand cuts in duplex DNA close to junctions with ss-DNA. Has a preference for simple Y, 5'-flap and replication fork-like structures. It cleaves the strand bearing the 5'-non-homologous arm at the branch site junction and generates ligatable, nicked products from the 5'-flap or replication fork substrates. Plays a critical role in maintaining the integrity of the ribosomal DNA (rDNA) loci, where it has a role in re-starting stalled replication forks. Has Holliday junction resolvase activity in vitro.</text>
</comment>
<comment type="cofactor">
    <cofactor evidence="1">
        <name>a divalent metal cation</name>
        <dbReference type="ChEBI" id="CHEBI:60240"/>
    </cofactor>
</comment>
<comment type="subunit">
    <text evidence="1">Forms a heterodimer with SLX4.</text>
</comment>
<comment type="subcellular location">
    <subcellularLocation>
        <location evidence="1">Nucleus</location>
    </subcellularLocation>
</comment>
<comment type="similarity">
    <text evidence="1">Belongs to the SLX1 family.</text>
</comment>
<name>SLX1_YEAS1</name>
<proteinExistence type="inferred from homology"/>
<gene>
    <name evidence="1" type="primary">SLX1</name>
    <name type="ORF">SCRG_02743</name>
</gene>